<keyword id="KW-0004">4Fe-4S</keyword>
<keyword id="KW-0963">Cytoplasm</keyword>
<keyword id="KW-0408">Iron</keyword>
<keyword id="KW-0411">Iron-sulfur</keyword>
<keyword id="KW-0479">Metal-binding</keyword>
<keyword id="KW-1185">Reference proteome</keyword>
<keyword id="KW-0949">S-adenosyl-L-methionine</keyword>
<keyword id="KW-0808">Transferase</keyword>
<keyword id="KW-0819">tRNA processing</keyword>
<reference key="1">
    <citation type="journal article" date="2003" name="Nature">
        <title>The genome sequence of Bacillus anthracis Ames and comparison to closely related bacteria.</title>
        <authorList>
            <person name="Read T.D."/>
            <person name="Peterson S.N."/>
            <person name="Tourasse N.J."/>
            <person name="Baillie L.W."/>
            <person name="Paulsen I.T."/>
            <person name="Nelson K.E."/>
            <person name="Tettelin H."/>
            <person name="Fouts D.E."/>
            <person name="Eisen J.A."/>
            <person name="Gill S.R."/>
            <person name="Holtzapple E.K."/>
            <person name="Okstad O.A."/>
            <person name="Helgason E."/>
            <person name="Rilstone J."/>
            <person name="Wu M."/>
            <person name="Kolonay J.F."/>
            <person name="Beanan M.J."/>
            <person name="Dodson R.J."/>
            <person name="Brinkac L.M."/>
            <person name="Gwinn M.L."/>
            <person name="DeBoy R.T."/>
            <person name="Madpu R."/>
            <person name="Daugherty S.C."/>
            <person name="Durkin A.S."/>
            <person name="Haft D.H."/>
            <person name="Nelson W.C."/>
            <person name="Peterson J.D."/>
            <person name="Pop M."/>
            <person name="Khouri H.M."/>
            <person name="Radune D."/>
            <person name="Benton J.L."/>
            <person name="Mahamoud Y."/>
            <person name="Jiang L."/>
            <person name="Hance I.R."/>
            <person name="Weidman J.F."/>
            <person name="Berry K.J."/>
            <person name="Plaut R.D."/>
            <person name="Wolf A.M."/>
            <person name="Watkins K.L."/>
            <person name="Nierman W.C."/>
            <person name="Hazen A."/>
            <person name="Cline R.T."/>
            <person name="Redmond C."/>
            <person name="Thwaite J.E."/>
            <person name="White O."/>
            <person name="Salzberg S.L."/>
            <person name="Thomason B."/>
            <person name="Friedlander A.M."/>
            <person name="Koehler T.M."/>
            <person name="Hanna P.C."/>
            <person name="Kolstoe A.-B."/>
            <person name="Fraser C.M."/>
        </authorList>
    </citation>
    <scope>NUCLEOTIDE SEQUENCE [LARGE SCALE GENOMIC DNA]</scope>
    <source>
        <strain>Ames / isolate Porton</strain>
    </source>
</reference>
<reference key="2">
    <citation type="submission" date="2004-01" db="EMBL/GenBank/DDBJ databases">
        <title>Complete genome sequence of Bacillus anthracis Sterne.</title>
        <authorList>
            <person name="Brettin T.S."/>
            <person name="Bruce D."/>
            <person name="Challacombe J.F."/>
            <person name="Gilna P."/>
            <person name="Han C."/>
            <person name="Hill K."/>
            <person name="Hitchcock P."/>
            <person name="Jackson P."/>
            <person name="Keim P."/>
            <person name="Longmire J."/>
            <person name="Lucas S."/>
            <person name="Okinaka R."/>
            <person name="Richardson P."/>
            <person name="Rubin E."/>
            <person name="Tice H."/>
        </authorList>
    </citation>
    <scope>NUCLEOTIDE SEQUENCE [LARGE SCALE GENOMIC DNA]</scope>
    <source>
        <strain>Sterne</strain>
    </source>
</reference>
<reference key="3">
    <citation type="journal article" date="2009" name="J. Bacteriol.">
        <title>The complete genome sequence of Bacillus anthracis Ames 'Ancestor'.</title>
        <authorList>
            <person name="Ravel J."/>
            <person name="Jiang L."/>
            <person name="Stanley S.T."/>
            <person name="Wilson M.R."/>
            <person name="Decker R.S."/>
            <person name="Read T.D."/>
            <person name="Worsham P."/>
            <person name="Keim P.S."/>
            <person name="Salzberg S.L."/>
            <person name="Fraser-Liggett C.M."/>
            <person name="Rasko D.A."/>
        </authorList>
    </citation>
    <scope>NUCLEOTIDE SEQUENCE [LARGE SCALE GENOMIC DNA]</scope>
    <source>
        <strain>Ames ancestor</strain>
    </source>
</reference>
<gene>
    <name evidence="1" type="primary">miaB</name>
    <name type="ordered locus">BA_3908</name>
    <name type="ordered locus">GBAA_3908</name>
    <name type="ordered locus">BAS3621</name>
</gene>
<protein>
    <recommendedName>
        <fullName evidence="1">tRNA-2-methylthio-N(6)-dimethylallyladenosine synthase</fullName>
        <ecNumber evidence="1">2.8.4.3</ecNumber>
    </recommendedName>
    <alternativeName>
        <fullName evidence="1">(Dimethylallyl)adenosine tRNA methylthiotransferase MiaB</fullName>
    </alternativeName>
    <alternativeName>
        <fullName evidence="1">tRNA-i(6)A37 methylthiotransferase</fullName>
    </alternativeName>
</protein>
<comment type="function">
    <text evidence="1">Catalyzes the methylthiolation of N6-(dimethylallyl)adenosine (i(6)A), leading to the formation of 2-methylthio-N6-(dimethylallyl)adenosine (ms(2)i(6)A) at position 37 in tRNAs that read codons beginning with uridine.</text>
</comment>
<comment type="catalytic activity">
    <reaction evidence="1">
        <text>N(6)-dimethylallyladenosine(37) in tRNA + (sulfur carrier)-SH + AH2 + 2 S-adenosyl-L-methionine = 2-methylsulfanyl-N(6)-dimethylallyladenosine(37) in tRNA + (sulfur carrier)-H + 5'-deoxyadenosine + L-methionine + A + S-adenosyl-L-homocysteine + 2 H(+)</text>
        <dbReference type="Rhea" id="RHEA:37067"/>
        <dbReference type="Rhea" id="RHEA-COMP:10375"/>
        <dbReference type="Rhea" id="RHEA-COMP:10376"/>
        <dbReference type="Rhea" id="RHEA-COMP:14737"/>
        <dbReference type="Rhea" id="RHEA-COMP:14739"/>
        <dbReference type="ChEBI" id="CHEBI:13193"/>
        <dbReference type="ChEBI" id="CHEBI:15378"/>
        <dbReference type="ChEBI" id="CHEBI:17319"/>
        <dbReference type="ChEBI" id="CHEBI:17499"/>
        <dbReference type="ChEBI" id="CHEBI:29917"/>
        <dbReference type="ChEBI" id="CHEBI:57844"/>
        <dbReference type="ChEBI" id="CHEBI:57856"/>
        <dbReference type="ChEBI" id="CHEBI:59789"/>
        <dbReference type="ChEBI" id="CHEBI:64428"/>
        <dbReference type="ChEBI" id="CHEBI:74415"/>
        <dbReference type="ChEBI" id="CHEBI:74417"/>
        <dbReference type="EC" id="2.8.4.3"/>
    </reaction>
</comment>
<comment type="cofactor">
    <cofactor evidence="1">
        <name>[4Fe-4S] cluster</name>
        <dbReference type="ChEBI" id="CHEBI:49883"/>
    </cofactor>
    <text evidence="1">Binds 2 [4Fe-4S] clusters. One cluster is coordinated with 3 cysteines and an exchangeable S-adenosyl-L-methionine.</text>
</comment>
<comment type="subunit">
    <text evidence="1">Monomer.</text>
</comment>
<comment type="subcellular location">
    <subcellularLocation>
        <location evidence="1">Cytoplasm</location>
    </subcellularLocation>
</comment>
<comment type="similarity">
    <text evidence="1">Belongs to the methylthiotransferase family. MiaB subfamily.</text>
</comment>
<organism>
    <name type="scientific">Bacillus anthracis</name>
    <dbReference type="NCBI Taxonomy" id="1392"/>
    <lineage>
        <taxon>Bacteria</taxon>
        <taxon>Bacillati</taxon>
        <taxon>Bacillota</taxon>
        <taxon>Bacilli</taxon>
        <taxon>Bacillales</taxon>
        <taxon>Bacillaceae</taxon>
        <taxon>Bacillus</taxon>
        <taxon>Bacillus cereus group</taxon>
    </lineage>
</organism>
<sequence>MNEQQRLASQQVNSSTKKEEKDYSKYFESVYQPPSLKDAKKRGKEEVKIERDFGLPEEFRNFGTGRKFYIRTYGCQMNEHDTEVMAGIFTALGYEPTFSTEDADVVLLNTCAIRENAENKVFGELGHLKSLKRRNSDLLIGVCGCMSQEESVVNKIMQKNQHVDMVFGTHNIHRLPYILKDAMFSKETVVEVWSKEGDVIENLPKVRRGDIKAWVNIMYGCDKFCTYCIVPYTRGKERSRRPEDIIQEIRHLAANGYKEITLLGQNVNAYGKDFEDIEYGLGDLMDELRKVDIARIRFTTSHPRDFDDHLIEVLGKGGNLVEHIHLPVQSGSTEMLKIMARKYSREHYLELVRKIKEAIPNAVLTTDIIVGFPNETDEQFEETMSLYREVGFDTAFTFIYSPREGTPAAKMKDNVPMEVKKERLQRLNALVNKLAIEKNDRYKGQIVEVLVDGESKNNPEVLAGYTRTNKLVNFVAPKSLIGQLVKIKVTDAKTWSLNGELVEEPIEVE</sequence>
<dbReference type="EC" id="2.8.4.3" evidence="1"/>
<dbReference type="EMBL" id="AE016879">
    <property type="protein sequence ID" value="AAP27641.1"/>
    <property type="molecule type" value="Genomic_DNA"/>
</dbReference>
<dbReference type="EMBL" id="AE017334">
    <property type="protein sequence ID" value="AAT33023.1"/>
    <property type="molecule type" value="Genomic_DNA"/>
</dbReference>
<dbReference type="EMBL" id="AE017225">
    <property type="protein sequence ID" value="AAT55925.1"/>
    <property type="molecule type" value="Genomic_DNA"/>
</dbReference>
<dbReference type="RefSeq" id="NP_846155.1">
    <property type="nucleotide sequence ID" value="NC_003997.3"/>
</dbReference>
<dbReference type="RefSeq" id="WP_001005402.1">
    <property type="nucleotide sequence ID" value="NZ_WXXJ01000001.1"/>
</dbReference>
<dbReference type="RefSeq" id="YP_029874.1">
    <property type="nucleotide sequence ID" value="NC_005945.1"/>
</dbReference>
<dbReference type="SMR" id="Q81WR0"/>
<dbReference type="STRING" id="261594.GBAA_3908"/>
<dbReference type="DNASU" id="1087981"/>
<dbReference type="GeneID" id="45023601"/>
<dbReference type="KEGG" id="ban:BA_3908"/>
<dbReference type="KEGG" id="bar:GBAA_3908"/>
<dbReference type="KEGG" id="bat:BAS3621"/>
<dbReference type="PATRIC" id="fig|198094.11.peg.3878"/>
<dbReference type="eggNOG" id="COG0621">
    <property type="taxonomic scope" value="Bacteria"/>
</dbReference>
<dbReference type="HOGENOM" id="CLU_018697_2_0_9"/>
<dbReference type="OMA" id="CEHFHIP"/>
<dbReference type="OrthoDB" id="9805215at2"/>
<dbReference type="Proteomes" id="UP000000427">
    <property type="component" value="Chromosome"/>
</dbReference>
<dbReference type="Proteomes" id="UP000000594">
    <property type="component" value="Chromosome"/>
</dbReference>
<dbReference type="GO" id="GO:0005829">
    <property type="term" value="C:cytosol"/>
    <property type="evidence" value="ECO:0007669"/>
    <property type="project" value="TreeGrafter"/>
</dbReference>
<dbReference type="GO" id="GO:0051539">
    <property type="term" value="F:4 iron, 4 sulfur cluster binding"/>
    <property type="evidence" value="ECO:0007669"/>
    <property type="project" value="UniProtKB-UniRule"/>
</dbReference>
<dbReference type="GO" id="GO:0046872">
    <property type="term" value="F:metal ion binding"/>
    <property type="evidence" value="ECO:0007669"/>
    <property type="project" value="UniProtKB-KW"/>
</dbReference>
<dbReference type="GO" id="GO:0035597">
    <property type="term" value="F:N6-isopentenyladenosine methylthiotransferase activity"/>
    <property type="evidence" value="ECO:0007669"/>
    <property type="project" value="TreeGrafter"/>
</dbReference>
<dbReference type="CDD" id="cd01335">
    <property type="entry name" value="Radical_SAM"/>
    <property type="match status" value="1"/>
</dbReference>
<dbReference type="FunFam" id="3.40.50.12160:FF:000006">
    <property type="entry name" value="tRNA-2-methylthio-N(6)-dimethylallyladenosine synthase"/>
    <property type="match status" value="1"/>
</dbReference>
<dbReference type="FunFam" id="3.80.30.20:FF:000001">
    <property type="entry name" value="tRNA-2-methylthio-N(6)-dimethylallyladenosine synthase 2"/>
    <property type="match status" value="1"/>
</dbReference>
<dbReference type="Gene3D" id="3.40.50.12160">
    <property type="entry name" value="Methylthiotransferase, N-terminal domain"/>
    <property type="match status" value="1"/>
</dbReference>
<dbReference type="Gene3D" id="3.80.30.20">
    <property type="entry name" value="tm_1862 like domain"/>
    <property type="match status" value="1"/>
</dbReference>
<dbReference type="HAMAP" id="MF_01864">
    <property type="entry name" value="tRNA_metthiotr_MiaB"/>
    <property type="match status" value="1"/>
</dbReference>
<dbReference type="InterPro" id="IPR006638">
    <property type="entry name" value="Elp3/MiaA/NifB-like_rSAM"/>
</dbReference>
<dbReference type="InterPro" id="IPR005839">
    <property type="entry name" value="Methylthiotransferase"/>
</dbReference>
<dbReference type="InterPro" id="IPR020612">
    <property type="entry name" value="Methylthiotransferase_CS"/>
</dbReference>
<dbReference type="InterPro" id="IPR013848">
    <property type="entry name" value="Methylthiotransferase_N"/>
</dbReference>
<dbReference type="InterPro" id="IPR038135">
    <property type="entry name" value="Methylthiotransferase_N_sf"/>
</dbReference>
<dbReference type="InterPro" id="IPR006463">
    <property type="entry name" value="MiaB_methiolase"/>
</dbReference>
<dbReference type="InterPro" id="IPR007197">
    <property type="entry name" value="rSAM"/>
</dbReference>
<dbReference type="InterPro" id="IPR023404">
    <property type="entry name" value="rSAM_horseshoe"/>
</dbReference>
<dbReference type="InterPro" id="IPR002792">
    <property type="entry name" value="TRAM_dom"/>
</dbReference>
<dbReference type="NCBIfam" id="TIGR01574">
    <property type="entry name" value="miaB-methiolase"/>
    <property type="match status" value="1"/>
</dbReference>
<dbReference type="NCBIfam" id="TIGR00089">
    <property type="entry name" value="MiaB/RimO family radical SAM methylthiotransferase"/>
    <property type="match status" value="1"/>
</dbReference>
<dbReference type="PANTHER" id="PTHR43020">
    <property type="entry name" value="CDK5 REGULATORY SUBUNIT-ASSOCIATED PROTEIN 1"/>
    <property type="match status" value="1"/>
</dbReference>
<dbReference type="PANTHER" id="PTHR43020:SF2">
    <property type="entry name" value="MITOCHONDRIAL TRNA METHYLTHIOTRANSFERASE CDK5RAP1"/>
    <property type="match status" value="1"/>
</dbReference>
<dbReference type="Pfam" id="PF04055">
    <property type="entry name" value="Radical_SAM"/>
    <property type="match status" value="1"/>
</dbReference>
<dbReference type="Pfam" id="PF01938">
    <property type="entry name" value="TRAM"/>
    <property type="match status" value="1"/>
</dbReference>
<dbReference type="Pfam" id="PF00919">
    <property type="entry name" value="UPF0004"/>
    <property type="match status" value="1"/>
</dbReference>
<dbReference type="SFLD" id="SFLDF00273">
    <property type="entry name" value="(dimethylallyl)adenosine_tRNA"/>
    <property type="match status" value="1"/>
</dbReference>
<dbReference type="SFLD" id="SFLDG01082">
    <property type="entry name" value="B12-binding_domain_containing"/>
    <property type="match status" value="1"/>
</dbReference>
<dbReference type="SFLD" id="SFLDS00029">
    <property type="entry name" value="Radical_SAM"/>
    <property type="match status" value="1"/>
</dbReference>
<dbReference type="SMART" id="SM00729">
    <property type="entry name" value="Elp3"/>
    <property type="match status" value="1"/>
</dbReference>
<dbReference type="SUPFAM" id="SSF102114">
    <property type="entry name" value="Radical SAM enzymes"/>
    <property type="match status" value="1"/>
</dbReference>
<dbReference type="PROSITE" id="PS51449">
    <property type="entry name" value="MTTASE_N"/>
    <property type="match status" value="1"/>
</dbReference>
<dbReference type="PROSITE" id="PS01278">
    <property type="entry name" value="MTTASE_RADICAL"/>
    <property type="match status" value="1"/>
</dbReference>
<dbReference type="PROSITE" id="PS51918">
    <property type="entry name" value="RADICAL_SAM"/>
    <property type="match status" value="1"/>
</dbReference>
<dbReference type="PROSITE" id="PS50926">
    <property type="entry name" value="TRAM"/>
    <property type="match status" value="1"/>
</dbReference>
<accession>Q81WR0</accession>
<accession>Q6HUW4</accession>
<accession>Q6KP40</accession>
<proteinExistence type="inferred from homology"/>
<name>MIAB_BACAN</name>
<evidence type="ECO:0000255" key="1">
    <source>
        <dbReference type="HAMAP-Rule" id="MF_01864"/>
    </source>
</evidence>
<evidence type="ECO:0000255" key="2">
    <source>
        <dbReference type="PROSITE-ProRule" id="PRU01266"/>
    </source>
</evidence>
<evidence type="ECO:0000256" key="3">
    <source>
        <dbReference type="SAM" id="MobiDB-lite"/>
    </source>
</evidence>
<feature type="chain" id="PRO_0000374124" description="tRNA-2-methylthio-N(6)-dimethylallyladenosine synthase">
    <location>
        <begin position="1"/>
        <end position="509"/>
    </location>
</feature>
<feature type="domain" description="MTTase N-terminal" evidence="1">
    <location>
        <begin position="66"/>
        <end position="184"/>
    </location>
</feature>
<feature type="domain" description="Radical SAM core" evidence="2">
    <location>
        <begin position="207"/>
        <end position="437"/>
    </location>
</feature>
<feature type="domain" description="TRAM" evidence="1">
    <location>
        <begin position="440"/>
        <end position="503"/>
    </location>
</feature>
<feature type="region of interest" description="Disordered" evidence="3">
    <location>
        <begin position="1"/>
        <end position="23"/>
    </location>
</feature>
<feature type="compositionally biased region" description="Polar residues" evidence="3">
    <location>
        <begin position="1"/>
        <end position="15"/>
    </location>
</feature>
<feature type="binding site" evidence="1">
    <location>
        <position position="75"/>
    </location>
    <ligand>
        <name>[4Fe-4S] cluster</name>
        <dbReference type="ChEBI" id="CHEBI:49883"/>
        <label>1</label>
    </ligand>
</feature>
<feature type="binding site" evidence="1">
    <location>
        <position position="111"/>
    </location>
    <ligand>
        <name>[4Fe-4S] cluster</name>
        <dbReference type="ChEBI" id="CHEBI:49883"/>
        <label>1</label>
    </ligand>
</feature>
<feature type="binding site" evidence="1">
    <location>
        <position position="145"/>
    </location>
    <ligand>
        <name>[4Fe-4S] cluster</name>
        <dbReference type="ChEBI" id="CHEBI:49883"/>
        <label>1</label>
    </ligand>
</feature>
<feature type="binding site" evidence="1">
    <location>
        <position position="221"/>
    </location>
    <ligand>
        <name>[4Fe-4S] cluster</name>
        <dbReference type="ChEBI" id="CHEBI:49883"/>
        <label>2</label>
        <note>4Fe-4S-S-AdoMet</note>
    </ligand>
</feature>
<feature type="binding site" evidence="1">
    <location>
        <position position="225"/>
    </location>
    <ligand>
        <name>[4Fe-4S] cluster</name>
        <dbReference type="ChEBI" id="CHEBI:49883"/>
        <label>2</label>
        <note>4Fe-4S-S-AdoMet</note>
    </ligand>
</feature>
<feature type="binding site" evidence="1">
    <location>
        <position position="228"/>
    </location>
    <ligand>
        <name>[4Fe-4S] cluster</name>
        <dbReference type="ChEBI" id="CHEBI:49883"/>
        <label>2</label>
        <note>4Fe-4S-S-AdoMet</note>
    </ligand>
</feature>